<dbReference type="EC" id="5.4.2.12" evidence="1"/>
<dbReference type="EMBL" id="CP001014">
    <property type="protein sequence ID" value="ACB40399.1"/>
    <property type="molecule type" value="Genomic_DNA"/>
</dbReference>
<dbReference type="RefSeq" id="WP_012350818.1">
    <property type="nucleotide sequence ID" value="NC_010525.1"/>
</dbReference>
<dbReference type="SMR" id="B1Y9H0"/>
<dbReference type="STRING" id="444157.Tneu_1474"/>
<dbReference type="GeneID" id="6165789"/>
<dbReference type="KEGG" id="tne:Tneu_1474"/>
<dbReference type="eggNOG" id="arCOG01696">
    <property type="taxonomic scope" value="Archaea"/>
</dbReference>
<dbReference type="HOGENOM" id="CLU_034906_2_0_2"/>
<dbReference type="OrthoDB" id="52918at2157"/>
<dbReference type="UniPathway" id="UPA00109">
    <property type="reaction ID" value="UER00186"/>
</dbReference>
<dbReference type="Proteomes" id="UP000001694">
    <property type="component" value="Chromosome"/>
</dbReference>
<dbReference type="GO" id="GO:0046872">
    <property type="term" value="F:metal ion binding"/>
    <property type="evidence" value="ECO:0007669"/>
    <property type="project" value="InterPro"/>
</dbReference>
<dbReference type="GO" id="GO:0004619">
    <property type="term" value="F:phosphoglycerate mutase activity"/>
    <property type="evidence" value="ECO:0007669"/>
    <property type="project" value="UniProtKB-EC"/>
</dbReference>
<dbReference type="GO" id="GO:0006096">
    <property type="term" value="P:glycolytic process"/>
    <property type="evidence" value="ECO:0007669"/>
    <property type="project" value="UniProtKB-UniRule"/>
</dbReference>
<dbReference type="CDD" id="cd16011">
    <property type="entry name" value="iPGM_like"/>
    <property type="match status" value="1"/>
</dbReference>
<dbReference type="Gene3D" id="3.40.720.10">
    <property type="entry name" value="Alkaline Phosphatase, subunit A"/>
    <property type="match status" value="1"/>
</dbReference>
<dbReference type="Gene3D" id="3.30.70.2130">
    <property type="entry name" value="Metalloenzyme domain"/>
    <property type="match status" value="1"/>
</dbReference>
<dbReference type="HAMAP" id="MF_01402_A">
    <property type="entry name" value="ApgM_A"/>
    <property type="match status" value="1"/>
</dbReference>
<dbReference type="InterPro" id="IPR017850">
    <property type="entry name" value="Alkaline_phosphatase_core_sf"/>
</dbReference>
<dbReference type="InterPro" id="IPR023665">
    <property type="entry name" value="ApgAM_prokaryotes"/>
</dbReference>
<dbReference type="InterPro" id="IPR006124">
    <property type="entry name" value="Metalloenzyme"/>
</dbReference>
<dbReference type="InterPro" id="IPR004456">
    <property type="entry name" value="Pglycerate_mutase_ApgM"/>
</dbReference>
<dbReference type="InterPro" id="IPR042253">
    <property type="entry name" value="Pglycerate_mutase_ApgM_sf"/>
</dbReference>
<dbReference type="NCBIfam" id="TIGR00306">
    <property type="entry name" value="apgM"/>
    <property type="match status" value="1"/>
</dbReference>
<dbReference type="NCBIfam" id="NF003104">
    <property type="entry name" value="PRK04024.1"/>
    <property type="match status" value="1"/>
</dbReference>
<dbReference type="PANTHER" id="PTHR31209">
    <property type="entry name" value="COFACTOR-INDEPENDENT PHOSPHOGLYCERATE MUTASE"/>
    <property type="match status" value="1"/>
</dbReference>
<dbReference type="PANTHER" id="PTHR31209:SF0">
    <property type="entry name" value="METALLOENZYME DOMAIN-CONTAINING PROTEIN"/>
    <property type="match status" value="1"/>
</dbReference>
<dbReference type="Pfam" id="PF01676">
    <property type="entry name" value="Metalloenzyme"/>
    <property type="match status" value="1"/>
</dbReference>
<dbReference type="Pfam" id="PF10143">
    <property type="entry name" value="PhosphMutase"/>
    <property type="match status" value="1"/>
</dbReference>
<dbReference type="PIRSF" id="PIRSF006392">
    <property type="entry name" value="IPGAM_arch"/>
    <property type="match status" value="1"/>
</dbReference>
<dbReference type="SUPFAM" id="SSF53649">
    <property type="entry name" value="Alkaline phosphatase-like"/>
    <property type="match status" value="1"/>
</dbReference>
<accession>B1Y9H0</accession>
<evidence type="ECO:0000255" key="1">
    <source>
        <dbReference type="HAMAP-Rule" id="MF_01402"/>
    </source>
</evidence>
<sequence>MPSVLWILFDGGGDRPTGGKTPFYVAFKPVIDYFTSLGSCGILDPISPGVRPGSDTAHLALFGYDPYRYYTGRGAFEALGAGVDLRPGDVAFRTNLATVDESGVVVDRRAGRYIAPEEARAVERLMASIGEEVGKAYGVEVLYRSTVEHRGVLVLRGPVSHKVSDTDPHKVGERIHMSEPLDGSKEAALTAQVVNEITRRFSAAAEGLEVNKARKASGRPPINAILLRGGGYMPQIEPVKERYKVRAAAIAGVALIRGVARAVGMDVYTAPGLGGTKDDVFDEAVKLAVELMSRYDVVFLHVKGTDSTAHDGDFRGKVSVIERLDKALSPYVDKIAGNYLVVTSDHATPVSIREHTGEPVPFLLYGPDVVTDDVGKFSELTCWRGALGRLRGIDVMPTLSSYLGLAEKFGE</sequence>
<protein>
    <recommendedName>
        <fullName evidence="1">2,3-bisphosphoglycerate-independent phosphoglycerate mutase</fullName>
        <shortName evidence="1">BPG-independent PGAM</shortName>
        <shortName evidence="1">Phosphoglyceromutase</shortName>
        <shortName evidence="1">aPGAM</shortName>
        <ecNumber evidence="1">5.4.2.12</ecNumber>
    </recommendedName>
</protein>
<name>APGM_PYRNV</name>
<comment type="function">
    <text evidence="1">Catalyzes the interconversion of 2-phosphoglycerate and 3-phosphoglycerate.</text>
</comment>
<comment type="catalytic activity">
    <reaction evidence="1">
        <text>(2R)-2-phosphoglycerate = (2R)-3-phosphoglycerate</text>
        <dbReference type="Rhea" id="RHEA:15901"/>
        <dbReference type="ChEBI" id="CHEBI:58272"/>
        <dbReference type="ChEBI" id="CHEBI:58289"/>
        <dbReference type="EC" id="5.4.2.12"/>
    </reaction>
</comment>
<comment type="pathway">
    <text evidence="1">Carbohydrate degradation; glycolysis; pyruvate from D-glyceraldehyde 3-phosphate: step 3/5.</text>
</comment>
<comment type="similarity">
    <text evidence="1">Belongs to the BPG-independent phosphoglycerate mutase family. A-PGAM subfamily.</text>
</comment>
<reference key="1">
    <citation type="submission" date="2008-03" db="EMBL/GenBank/DDBJ databases">
        <title>Complete sequence of Thermoproteus neutrophilus V24Sta.</title>
        <authorList>
            <consortium name="US DOE Joint Genome Institute"/>
            <person name="Copeland A."/>
            <person name="Lucas S."/>
            <person name="Lapidus A."/>
            <person name="Glavina del Rio T."/>
            <person name="Dalin E."/>
            <person name="Tice H."/>
            <person name="Bruce D."/>
            <person name="Goodwin L."/>
            <person name="Pitluck S."/>
            <person name="Sims D."/>
            <person name="Brettin T."/>
            <person name="Detter J.C."/>
            <person name="Han C."/>
            <person name="Kuske C.R."/>
            <person name="Schmutz J."/>
            <person name="Larimer F."/>
            <person name="Land M."/>
            <person name="Hauser L."/>
            <person name="Kyrpides N."/>
            <person name="Mikhailova N."/>
            <person name="Biddle J.F."/>
            <person name="Zhang Z."/>
            <person name="Fitz-Gibbon S.T."/>
            <person name="Lowe T.M."/>
            <person name="Saltikov C."/>
            <person name="House C.H."/>
            <person name="Richardson P."/>
        </authorList>
    </citation>
    <scope>NUCLEOTIDE SEQUENCE [LARGE SCALE GENOMIC DNA]</scope>
    <source>
        <strain>DSM 2338 / JCM 9278 / NBRC 100436 / V24Sta</strain>
    </source>
</reference>
<keyword id="KW-0324">Glycolysis</keyword>
<keyword id="KW-0413">Isomerase</keyword>
<organism>
    <name type="scientific">Pyrobaculum neutrophilum (strain DSM 2338 / JCM 9278 / NBRC 100436 / V24Sta)</name>
    <name type="common">Thermoproteus neutrophilus</name>
    <dbReference type="NCBI Taxonomy" id="444157"/>
    <lineage>
        <taxon>Archaea</taxon>
        <taxon>Thermoproteota</taxon>
        <taxon>Thermoprotei</taxon>
        <taxon>Thermoproteales</taxon>
        <taxon>Thermoproteaceae</taxon>
        <taxon>Pyrobaculum</taxon>
    </lineage>
</organism>
<proteinExistence type="inferred from homology"/>
<feature type="chain" id="PRO_1000145452" description="2,3-bisphosphoglycerate-independent phosphoglycerate mutase">
    <location>
        <begin position="1"/>
        <end position="411"/>
    </location>
</feature>
<gene>
    <name evidence="1" type="primary">apgM</name>
    <name type="ordered locus">Tneu_1474</name>
</gene>